<comment type="function">
    <text evidence="1">Catalyzes oxygen-dependent 5-hydroxyuridine (ho5U) modification at position 34 in tRNAs.</text>
</comment>
<comment type="catalytic activity">
    <reaction evidence="1">
        <text>uridine(34) in tRNA + AH2 + O2 = 5-hydroxyuridine(34) in tRNA + A + H2O</text>
        <dbReference type="Rhea" id="RHEA:64224"/>
        <dbReference type="Rhea" id="RHEA-COMP:11727"/>
        <dbReference type="Rhea" id="RHEA-COMP:13381"/>
        <dbReference type="ChEBI" id="CHEBI:13193"/>
        <dbReference type="ChEBI" id="CHEBI:15377"/>
        <dbReference type="ChEBI" id="CHEBI:15379"/>
        <dbReference type="ChEBI" id="CHEBI:17499"/>
        <dbReference type="ChEBI" id="CHEBI:65315"/>
        <dbReference type="ChEBI" id="CHEBI:136877"/>
    </reaction>
</comment>
<comment type="similarity">
    <text evidence="1">Belongs to the TrhO family.</text>
</comment>
<feature type="chain" id="PRO_1000135458" description="tRNA uridine(34) hydroxylase">
    <location>
        <begin position="1"/>
        <end position="297"/>
    </location>
</feature>
<feature type="domain" description="Rhodanese" evidence="1">
    <location>
        <begin position="133"/>
        <end position="228"/>
    </location>
</feature>
<feature type="active site" description="Cysteine persulfide intermediate" evidence="1">
    <location>
        <position position="188"/>
    </location>
</feature>
<organism>
    <name type="scientific">Pseudarthrobacter chlorophenolicus (strain ATCC 700700 / DSM 12829 / CIP 107037 / JCM 12360 / KCTC 9906 / NCIMB 13794 / A6)</name>
    <name type="common">Arthrobacter chlorophenolicus</name>
    <dbReference type="NCBI Taxonomy" id="452863"/>
    <lineage>
        <taxon>Bacteria</taxon>
        <taxon>Bacillati</taxon>
        <taxon>Actinomycetota</taxon>
        <taxon>Actinomycetes</taxon>
        <taxon>Micrococcales</taxon>
        <taxon>Micrococcaceae</taxon>
        <taxon>Pseudarthrobacter</taxon>
    </lineage>
</organism>
<evidence type="ECO:0000255" key="1">
    <source>
        <dbReference type="HAMAP-Rule" id="MF_00469"/>
    </source>
</evidence>
<gene>
    <name evidence="1" type="primary">trhO</name>
    <name type="ordered locus">Achl_3153</name>
</gene>
<keyword id="KW-0560">Oxidoreductase</keyword>
<keyword id="KW-0819">tRNA processing</keyword>
<dbReference type="EC" id="1.14.-.-" evidence="1"/>
<dbReference type="EMBL" id="CP001341">
    <property type="protein sequence ID" value="ACL41114.1"/>
    <property type="molecule type" value="Genomic_DNA"/>
</dbReference>
<dbReference type="RefSeq" id="WP_015938310.1">
    <property type="nucleotide sequence ID" value="NC_011886.1"/>
</dbReference>
<dbReference type="SMR" id="B8HFS1"/>
<dbReference type="STRING" id="452863.Achl_3153"/>
<dbReference type="KEGG" id="ach:Achl_3153"/>
<dbReference type="eggNOG" id="COG1054">
    <property type="taxonomic scope" value="Bacteria"/>
</dbReference>
<dbReference type="HOGENOM" id="CLU_038878_1_0_11"/>
<dbReference type="OrthoDB" id="9778326at2"/>
<dbReference type="Proteomes" id="UP000002505">
    <property type="component" value="Chromosome"/>
</dbReference>
<dbReference type="GO" id="GO:0016705">
    <property type="term" value="F:oxidoreductase activity, acting on paired donors, with incorporation or reduction of molecular oxygen"/>
    <property type="evidence" value="ECO:0007669"/>
    <property type="project" value="UniProtKB-UniRule"/>
</dbReference>
<dbReference type="GO" id="GO:0006400">
    <property type="term" value="P:tRNA modification"/>
    <property type="evidence" value="ECO:0007669"/>
    <property type="project" value="UniProtKB-UniRule"/>
</dbReference>
<dbReference type="CDD" id="cd01518">
    <property type="entry name" value="RHOD_YceA"/>
    <property type="match status" value="1"/>
</dbReference>
<dbReference type="Gene3D" id="3.30.70.100">
    <property type="match status" value="1"/>
</dbReference>
<dbReference type="Gene3D" id="3.40.250.10">
    <property type="entry name" value="Rhodanese-like domain"/>
    <property type="match status" value="1"/>
</dbReference>
<dbReference type="HAMAP" id="MF_00469">
    <property type="entry name" value="TrhO"/>
    <property type="match status" value="1"/>
</dbReference>
<dbReference type="InterPro" id="IPR001763">
    <property type="entry name" value="Rhodanese-like_dom"/>
</dbReference>
<dbReference type="InterPro" id="IPR036873">
    <property type="entry name" value="Rhodanese-like_dom_sf"/>
</dbReference>
<dbReference type="InterPro" id="IPR022111">
    <property type="entry name" value="Rhodanese_C"/>
</dbReference>
<dbReference type="InterPro" id="IPR020936">
    <property type="entry name" value="TrhO"/>
</dbReference>
<dbReference type="InterPro" id="IPR040503">
    <property type="entry name" value="TRHO_N"/>
</dbReference>
<dbReference type="NCBIfam" id="NF001134">
    <property type="entry name" value="PRK00142.1-2"/>
    <property type="match status" value="1"/>
</dbReference>
<dbReference type="PANTHER" id="PTHR43268">
    <property type="entry name" value="THIOSULFATE SULFURTRANSFERASE/RHODANESE-LIKE DOMAIN-CONTAINING PROTEIN 2"/>
    <property type="match status" value="1"/>
</dbReference>
<dbReference type="PANTHER" id="PTHR43268:SF6">
    <property type="entry name" value="THIOSULFATE SULFURTRANSFERASE_RHODANESE-LIKE DOMAIN-CONTAINING PROTEIN 2"/>
    <property type="match status" value="1"/>
</dbReference>
<dbReference type="Pfam" id="PF00581">
    <property type="entry name" value="Rhodanese"/>
    <property type="match status" value="1"/>
</dbReference>
<dbReference type="Pfam" id="PF12368">
    <property type="entry name" value="Rhodanese_C"/>
    <property type="match status" value="1"/>
</dbReference>
<dbReference type="Pfam" id="PF17773">
    <property type="entry name" value="UPF0176_N"/>
    <property type="match status" value="1"/>
</dbReference>
<dbReference type="SMART" id="SM00450">
    <property type="entry name" value="RHOD"/>
    <property type="match status" value="1"/>
</dbReference>
<dbReference type="SUPFAM" id="SSF52821">
    <property type="entry name" value="Rhodanese/Cell cycle control phosphatase"/>
    <property type="match status" value="1"/>
</dbReference>
<dbReference type="PROSITE" id="PS50206">
    <property type="entry name" value="RHODANESE_3"/>
    <property type="match status" value="1"/>
</dbReference>
<accession>B8HFS1</accession>
<reference key="1">
    <citation type="submission" date="2009-01" db="EMBL/GenBank/DDBJ databases">
        <title>Complete sequence of chromosome of Arthrobacter chlorophenolicus A6.</title>
        <authorList>
            <consortium name="US DOE Joint Genome Institute"/>
            <person name="Lucas S."/>
            <person name="Copeland A."/>
            <person name="Lapidus A."/>
            <person name="Glavina del Rio T."/>
            <person name="Tice H."/>
            <person name="Bruce D."/>
            <person name="Goodwin L."/>
            <person name="Pitluck S."/>
            <person name="Goltsman E."/>
            <person name="Clum A."/>
            <person name="Larimer F."/>
            <person name="Land M."/>
            <person name="Hauser L."/>
            <person name="Kyrpides N."/>
            <person name="Mikhailova N."/>
            <person name="Jansson J."/>
            <person name="Richardson P."/>
        </authorList>
    </citation>
    <scope>NUCLEOTIDE SEQUENCE [LARGE SCALE GENOMIC DNA]</scope>
    <source>
        <strain>ATCC 700700 / DSM 12829 / CIP 107037 / JCM 12360 / KCTC 9906 / NCIMB 13794 / A6</strain>
    </source>
</reference>
<proteinExistence type="inferred from homology"/>
<name>TRHO_PSECP</name>
<protein>
    <recommendedName>
        <fullName evidence="1">tRNA uridine(34) hydroxylase</fullName>
        <ecNumber evidence="1">1.14.-.-</ecNumber>
    </recommendedName>
    <alternativeName>
        <fullName evidence="1">tRNA hydroxylation protein O</fullName>
    </alternativeName>
</protein>
<sequence length="297" mass="32498">MALNRIVLFYGFTPIPDPDAVRLWQRALCEKLGLTGRIIISKDGINATVGGEIGAVKQYVKTTREYKGFHGIDVKWSDGGAEDFPRLSVKVRDEIVSFGAPGELTVDAGGVVGGGTHLKPEELHELVEARKQSGDEVVFFDGRNAFEAQIGRFKDAVVPDVATTHDFIKELDSGKYDALKDKPVATYCTGGIRCEVLSSLMVNRGFKEVYQLDGGIVRYGETFKDQGLWEGSLYVFDKRMHLEFSDEAKTIGECVRCKAPTSKFENCSNPSCRTLTLYCADCAASPETLRCPGGCAA</sequence>